<accession>Q8DZM7</accession>
<gene>
    <name evidence="1" type="primary">glyA</name>
    <name type="ordered locus">SAG1074</name>
</gene>
<reference key="1">
    <citation type="journal article" date="2002" name="Proc. Natl. Acad. Sci. U.S.A.">
        <title>Complete genome sequence and comparative genomic analysis of an emerging human pathogen, serotype V Streptococcus agalactiae.</title>
        <authorList>
            <person name="Tettelin H."/>
            <person name="Masignani V."/>
            <person name="Cieslewicz M.J."/>
            <person name="Eisen J.A."/>
            <person name="Peterson S.N."/>
            <person name="Wessels M.R."/>
            <person name="Paulsen I.T."/>
            <person name="Nelson K.E."/>
            <person name="Margarit I."/>
            <person name="Read T.D."/>
            <person name="Madoff L.C."/>
            <person name="Wolf A.M."/>
            <person name="Beanan M.J."/>
            <person name="Brinkac L.M."/>
            <person name="Daugherty S.C."/>
            <person name="DeBoy R.T."/>
            <person name="Durkin A.S."/>
            <person name="Kolonay J.F."/>
            <person name="Madupu R."/>
            <person name="Lewis M.R."/>
            <person name="Radune D."/>
            <person name="Fedorova N.B."/>
            <person name="Scanlan D."/>
            <person name="Khouri H.M."/>
            <person name="Mulligan S."/>
            <person name="Carty H.A."/>
            <person name="Cline R.T."/>
            <person name="Van Aken S.E."/>
            <person name="Gill J."/>
            <person name="Scarselli M."/>
            <person name="Mora M."/>
            <person name="Iacobini E.T."/>
            <person name="Brettoni C."/>
            <person name="Galli G."/>
            <person name="Mariani M."/>
            <person name="Vegni F."/>
            <person name="Maione D."/>
            <person name="Rinaudo D."/>
            <person name="Rappuoli R."/>
            <person name="Telford J.L."/>
            <person name="Kasper D.L."/>
            <person name="Grandi G."/>
            <person name="Fraser C.M."/>
        </authorList>
    </citation>
    <scope>NUCLEOTIDE SEQUENCE [LARGE SCALE GENOMIC DNA]</scope>
    <source>
        <strain>ATCC BAA-611 / 2603 V/R</strain>
    </source>
</reference>
<name>GLYA_STRA5</name>
<organism>
    <name type="scientific">Streptococcus agalactiae serotype V (strain ATCC BAA-611 / 2603 V/R)</name>
    <dbReference type="NCBI Taxonomy" id="208435"/>
    <lineage>
        <taxon>Bacteria</taxon>
        <taxon>Bacillati</taxon>
        <taxon>Bacillota</taxon>
        <taxon>Bacilli</taxon>
        <taxon>Lactobacillales</taxon>
        <taxon>Streptococcaceae</taxon>
        <taxon>Streptococcus</taxon>
    </lineage>
</organism>
<sequence>MIFDKDNFKEFDQELWQAIHDEEIRQQNNIELIASENVVSKAVMAAQGSVLTNKYAEGYPSHRYYGGTDCVDVVESLAIERAKTLFNAEFANVQPHSGSQANAAAYMALIEPGDTVLGMDLAAGGHLTHGASVSFSGKTYHFVSYSVDPKTEMLDYDNILKIAQETQPKLIVAGASAYSRIIDFEKFRQIADAVDAYLMVDMAHIAGLVASGHHPSPIPYAHVTTTTTHKTLRGPRGGLILTNDEAIAKKINSAVFPGLQGGPLEHVIAAKAVALKEALDPSFKIYGEDIIKNAQAMAKVFKEDDDFHLISDGTDNHLFLVDVTKVIENGKKAQNVLEEVNITLNKNSIPFERLSPFKTSGIRIGTPAITSRGMGVEESRRIAELMIKALKNHENQDVLTEVRQEIKSLTDAFPLYEN</sequence>
<proteinExistence type="inferred from homology"/>
<protein>
    <recommendedName>
        <fullName evidence="1">Serine hydroxymethyltransferase</fullName>
        <shortName evidence="1">SHMT</shortName>
        <shortName evidence="1">Serine methylase</shortName>
        <ecNumber evidence="1">2.1.2.1</ecNumber>
    </recommendedName>
</protein>
<feature type="chain" id="PRO_0000113670" description="Serine hydroxymethyltransferase">
    <location>
        <begin position="1"/>
        <end position="418"/>
    </location>
</feature>
<feature type="binding site" evidence="1">
    <location>
        <position position="121"/>
    </location>
    <ligand>
        <name>(6S)-5,6,7,8-tetrahydrofolate</name>
        <dbReference type="ChEBI" id="CHEBI:57453"/>
    </ligand>
</feature>
<feature type="binding site" evidence="1">
    <location>
        <begin position="125"/>
        <end position="127"/>
    </location>
    <ligand>
        <name>(6S)-5,6,7,8-tetrahydrofolate</name>
        <dbReference type="ChEBI" id="CHEBI:57453"/>
    </ligand>
</feature>
<feature type="binding site" evidence="1">
    <location>
        <begin position="355"/>
        <end position="357"/>
    </location>
    <ligand>
        <name>(6S)-5,6,7,8-tetrahydrofolate</name>
        <dbReference type="ChEBI" id="CHEBI:57453"/>
    </ligand>
</feature>
<feature type="site" description="Plays an important role in substrate specificity" evidence="1">
    <location>
        <position position="229"/>
    </location>
</feature>
<feature type="modified residue" description="N6-(pyridoxal phosphate)lysine" evidence="1">
    <location>
        <position position="230"/>
    </location>
</feature>
<comment type="function">
    <text evidence="1">Catalyzes the reversible interconversion of serine and glycine with tetrahydrofolate (THF) serving as the one-carbon carrier. This reaction serves as the major source of one-carbon groups required for the biosynthesis of purines, thymidylate, methionine, and other important biomolecules. Also exhibits THF-independent aldolase activity toward beta-hydroxyamino acids, producing glycine and aldehydes, via a retro-aldol mechanism.</text>
</comment>
<comment type="catalytic activity">
    <reaction evidence="1">
        <text>(6R)-5,10-methylene-5,6,7,8-tetrahydrofolate + glycine + H2O = (6S)-5,6,7,8-tetrahydrofolate + L-serine</text>
        <dbReference type="Rhea" id="RHEA:15481"/>
        <dbReference type="ChEBI" id="CHEBI:15377"/>
        <dbReference type="ChEBI" id="CHEBI:15636"/>
        <dbReference type="ChEBI" id="CHEBI:33384"/>
        <dbReference type="ChEBI" id="CHEBI:57305"/>
        <dbReference type="ChEBI" id="CHEBI:57453"/>
        <dbReference type="EC" id="2.1.2.1"/>
    </reaction>
</comment>
<comment type="cofactor">
    <cofactor evidence="1">
        <name>pyridoxal 5'-phosphate</name>
        <dbReference type="ChEBI" id="CHEBI:597326"/>
    </cofactor>
</comment>
<comment type="pathway">
    <text evidence="1">One-carbon metabolism; tetrahydrofolate interconversion.</text>
</comment>
<comment type="pathway">
    <text evidence="1">Amino-acid biosynthesis; glycine biosynthesis; glycine from L-serine: step 1/1.</text>
</comment>
<comment type="subunit">
    <text evidence="1">Homodimer.</text>
</comment>
<comment type="subcellular location">
    <subcellularLocation>
        <location evidence="1">Cytoplasm</location>
    </subcellularLocation>
</comment>
<comment type="similarity">
    <text evidence="1">Belongs to the SHMT family.</text>
</comment>
<keyword id="KW-0028">Amino-acid biosynthesis</keyword>
<keyword id="KW-0963">Cytoplasm</keyword>
<keyword id="KW-0554">One-carbon metabolism</keyword>
<keyword id="KW-0663">Pyridoxal phosphate</keyword>
<keyword id="KW-1185">Reference proteome</keyword>
<keyword id="KW-0808">Transferase</keyword>
<dbReference type="EC" id="2.1.2.1" evidence="1"/>
<dbReference type="EMBL" id="AE009948">
    <property type="protein sequence ID" value="AAM99955.1"/>
    <property type="molecule type" value="Genomic_DNA"/>
</dbReference>
<dbReference type="RefSeq" id="NP_688083.1">
    <property type="nucleotide sequence ID" value="NC_004116.1"/>
</dbReference>
<dbReference type="RefSeq" id="WP_000575546.1">
    <property type="nucleotide sequence ID" value="NC_004116.1"/>
</dbReference>
<dbReference type="SMR" id="Q8DZM7"/>
<dbReference type="STRING" id="208435.SAG1074"/>
<dbReference type="KEGG" id="sag:SAG1074"/>
<dbReference type="PATRIC" id="fig|208435.3.peg.1083"/>
<dbReference type="HOGENOM" id="CLU_022477_2_1_9"/>
<dbReference type="OrthoDB" id="9803846at2"/>
<dbReference type="UniPathway" id="UPA00193"/>
<dbReference type="UniPathway" id="UPA00288">
    <property type="reaction ID" value="UER01023"/>
</dbReference>
<dbReference type="Proteomes" id="UP000000821">
    <property type="component" value="Chromosome"/>
</dbReference>
<dbReference type="GO" id="GO:0005829">
    <property type="term" value="C:cytosol"/>
    <property type="evidence" value="ECO:0007669"/>
    <property type="project" value="TreeGrafter"/>
</dbReference>
<dbReference type="GO" id="GO:0004372">
    <property type="term" value="F:glycine hydroxymethyltransferase activity"/>
    <property type="evidence" value="ECO:0007669"/>
    <property type="project" value="UniProtKB-UniRule"/>
</dbReference>
<dbReference type="GO" id="GO:0030170">
    <property type="term" value="F:pyridoxal phosphate binding"/>
    <property type="evidence" value="ECO:0007669"/>
    <property type="project" value="UniProtKB-UniRule"/>
</dbReference>
<dbReference type="GO" id="GO:0019264">
    <property type="term" value="P:glycine biosynthetic process from serine"/>
    <property type="evidence" value="ECO:0007669"/>
    <property type="project" value="UniProtKB-UniRule"/>
</dbReference>
<dbReference type="GO" id="GO:0035999">
    <property type="term" value="P:tetrahydrofolate interconversion"/>
    <property type="evidence" value="ECO:0007669"/>
    <property type="project" value="UniProtKB-UniRule"/>
</dbReference>
<dbReference type="CDD" id="cd00378">
    <property type="entry name" value="SHMT"/>
    <property type="match status" value="1"/>
</dbReference>
<dbReference type="FunFam" id="3.40.640.10:FF:000001">
    <property type="entry name" value="Serine hydroxymethyltransferase"/>
    <property type="match status" value="1"/>
</dbReference>
<dbReference type="FunFam" id="3.90.1150.10:FF:000072">
    <property type="entry name" value="Serine hydroxymethyltransferase"/>
    <property type="match status" value="1"/>
</dbReference>
<dbReference type="Gene3D" id="3.90.1150.10">
    <property type="entry name" value="Aspartate Aminotransferase, domain 1"/>
    <property type="match status" value="1"/>
</dbReference>
<dbReference type="Gene3D" id="3.40.640.10">
    <property type="entry name" value="Type I PLP-dependent aspartate aminotransferase-like (Major domain)"/>
    <property type="match status" value="1"/>
</dbReference>
<dbReference type="HAMAP" id="MF_00051">
    <property type="entry name" value="SHMT"/>
    <property type="match status" value="1"/>
</dbReference>
<dbReference type="InterPro" id="IPR015424">
    <property type="entry name" value="PyrdxlP-dep_Trfase"/>
</dbReference>
<dbReference type="InterPro" id="IPR015421">
    <property type="entry name" value="PyrdxlP-dep_Trfase_major"/>
</dbReference>
<dbReference type="InterPro" id="IPR015422">
    <property type="entry name" value="PyrdxlP-dep_Trfase_small"/>
</dbReference>
<dbReference type="InterPro" id="IPR001085">
    <property type="entry name" value="Ser_HO-MeTrfase"/>
</dbReference>
<dbReference type="InterPro" id="IPR049943">
    <property type="entry name" value="Ser_HO-MeTrfase-like"/>
</dbReference>
<dbReference type="InterPro" id="IPR019798">
    <property type="entry name" value="Ser_HO-MeTrfase_PLP_BS"/>
</dbReference>
<dbReference type="InterPro" id="IPR039429">
    <property type="entry name" value="SHMT-like_dom"/>
</dbReference>
<dbReference type="NCBIfam" id="NF000586">
    <property type="entry name" value="PRK00011.1"/>
    <property type="match status" value="1"/>
</dbReference>
<dbReference type="PANTHER" id="PTHR11680">
    <property type="entry name" value="SERINE HYDROXYMETHYLTRANSFERASE"/>
    <property type="match status" value="1"/>
</dbReference>
<dbReference type="PANTHER" id="PTHR11680:SF35">
    <property type="entry name" value="SERINE HYDROXYMETHYLTRANSFERASE 1"/>
    <property type="match status" value="1"/>
</dbReference>
<dbReference type="Pfam" id="PF00464">
    <property type="entry name" value="SHMT"/>
    <property type="match status" value="1"/>
</dbReference>
<dbReference type="PIRSF" id="PIRSF000412">
    <property type="entry name" value="SHMT"/>
    <property type="match status" value="1"/>
</dbReference>
<dbReference type="SUPFAM" id="SSF53383">
    <property type="entry name" value="PLP-dependent transferases"/>
    <property type="match status" value="1"/>
</dbReference>
<dbReference type="PROSITE" id="PS00096">
    <property type="entry name" value="SHMT"/>
    <property type="match status" value="1"/>
</dbReference>
<evidence type="ECO:0000255" key="1">
    <source>
        <dbReference type="HAMAP-Rule" id="MF_00051"/>
    </source>
</evidence>